<gene>
    <name evidence="1" type="primary">nadE</name>
    <name type="ordered locus">Smar_1310</name>
</gene>
<organism>
    <name type="scientific">Staphylothermus marinus (strain ATCC 43588 / DSM 3639 / JCM 9404 / F1)</name>
    <dbReference type="NCBI Taxonomy" id="399550"/>
    <lineage>
        <taxon>Archaea</taxon>
        <taxon>Thermoproteota</taxon>
        <taxon>Thermoprotei</taxon>
        <taxon>Desulfurococcales</taxon>
        <taxon>Desulfurococcaceae</taxon>
        <taxon>Staphylothermus</taxon>
    </lineage>
</organism>
<protein>
    <recommendedName>
        <fullName evidence="1">NH(3)-dependent NAD(+) synthetase</fullName>
        <ecNumber evidence="1">6.3.1.5</ecNumber>
    </recommendedName>
</protein>
<reference key="1">
    <citation type="journal article" date="2009" name="BMC Genomics">
        <title>The complete genome sequence of Staphylothermus marinus reveals differences in sulfur metabolism among heterotrophic Crenarchaeota.</title>
        <authorList>
            <person name="Anderson I.J."/>
            <person name="Dharmarajan L."/>
            <person name="Rodriguez J."/>
            <person name="Hooper S."/>
            <person name="Porat I."/>
            <person name="Ulrich L.E."/>
            <person name="Elkins J.G."/>
            <person name="Mavromatis K."/>
            <person name="Sun H."/>
            <person name="Land M."/>
            <person name="Lapidus A."/>
            <person name="Lucas S."/>
            <person name="Barry K."/>
            <person name="Huber H."/>
            <person name="Zhulin I.B."/>
            <person name="Whitman W.B."/>
            <person name="Mukhopadhyay B."/>
            <person name="Woese C."/>
            <person name="Bristow J."/>
            <person name="Kyrpides N."/>
        </authorList>
    </citation>
    <scope>NUCLEOTIDE SEQUENCE [LARGE SCALE GENOMIC DNA]</scope>
    <source>
        <strain>ATCC 43588 / DSM 3639 / JCM 9404 / F1</strain>
    </source>
</reference>
<reference key="2">
    <citation type="journal article" date="2009" name="Stand. Genomic Sci.">
        <title>Complete genome sequence of Staphylothermus marinus Stetter and Fiala 1986 type strain F1.</title>
        <authorList>
            <person name="Anderson I.J."/>
            <person name="Sun H."/>
            <person name="Lapidus A."/>
            <person name="Copeland A."/>
            <person name="Glavina Del Rio T."/>
            <person name="Tice H."/>
            <person name="Dalin E."/>
            <person name="Lucas S."/>
            <person name="Barry K."/>
            <person name="Land M."/>
            <person name="Richardson P."/>
            <person name="Huber H."/>
            <person name="Kyrpides N.C."/>
        </authorList>
    </citation>
    <scope>NUCLEOTIDE SEQUENCE [LARGE SCALE GENOMIC DNA]</scope>
    <source>
        <strain>ATCC 43588 / DSM 3639 / JCM 9404 / F1</strain>
    </source>
</reference>
<sequence length="275" mass="31185">MVITIKDIINIPYDKAEKTIIEFIKNKIEEANLKGAVIGLSGGVDSSVTLLLTMKAIGIERVTALIMPDTRVTPKRDIEDALWLVKKYGIKYYVIRIDDIVDSYSAMPFFNINYNIPTGNLRARIRMNILYYYANLHNYIVVGTGDRSEILIGYFTKYGDGGVDILPIGSLFKTQVRKMGDYLGLPEKITSKPSSPALWLGHKAEEELGIKYETIDLVLYALFDKHIEPEKVPEHTGVDPSIVAKILEMHRKTRHKRLSPPIPSLPWVKEPIREI</sequence>
<accession>A3DP41</accession>
<proteinExistence type="inferred from homology"/>
<comment type="function">
    <text evidence="1">Catalyzes the ATP-dependent amidation of deamido-NAD to form NAD. Uses ammonia as a nitrogen source.</text>
</comment>
<comment type="catalytic activity">
    <reaction evidence="1">
        <text>deamido-NAD(+) + NH4(+) + ATP = AMP + diphosphate + NAD(+) + H(+)</text>
        <dbReference type="Rhea" id="RHEA:21188"/>
        <dbReference type="ChEBI" id="CHEBI:15378"/>
        <dbReference type="ChEBI" id="CHEBI:28938"/>
        <dbReference type="ChEBI" id="CHEBI:30616"/>
        <dbReference type="ChEBI" id="CHEBI:33019"/>
        <dbReference type="ChEBI" id="CHEBI:57540"/>
        <dbReference type="ChEBI" id="CHEBI:58437"/>
        <dbReference type="ChEBI" id="CHEBI:456215"/>
        <dbReference type="EC" id="6.3.1.5"/>
    </reaction>
</comment>
<comment type="pathway">
    <text evidence="1">Cofactor biosynthesis; NAD(+) biosynthesis; NAD(+) from deamido-NAD(+) (ammonia route): step 1/1.</text>
</comment>
<comment type="subunit">
    <text evidence="1">Homodimer.</text>
</comment>
<comment type="similarity">
    <text evidence="1">Belongs to the NAD synthetase family.</text>
</comment>
<keyword id="KW-0067">ATP-binding</keyword>
<keyword id="KW-0436">Ligase</keyword>
<keyword id="KW-0460">Magnesium</keyword>
<keyword id="KW-0479">Metal-binding</keyword>
<keyword id="KW-0520">NAD</keyword>
<keyword id="KW-0547">Nucleotide-binding</keyword>
<keyword id="KW-1185">Reference proteome</keyword>
<dbReference type="EC" id="6.3.1.5" evidence="1"/>
<dbReference type="EMBL" id="CP000575">
    <property type="protein sequence ID" value="ABN70401.1"/>
    <property type="molecule type" value="Genomic_DNA"/>
</dbReference>
<dbReference type="RefSeq" id="WP_011839595.1">
    <property type="nucleotide sequence ID" value="NC_009033.1"/>
</dbReference>
<dbReference type="SMR" id="A3DP41"/>
<dbReference type="STRING" id="399550.Smar_1310"/>
<dbReference type="GeneID" id="4906619"/>
<dbReference type="KEGG" id="smr:Smar_1310"/>
<dbReference type="eggNOG" id="arCOG00069">
    <property type="taxonomic scope" value="Archaea"/>
</dbReference>
<dbReference type="HOGENOM" id="CLU_059327_1_1_2"/>
<dbReference type="OrthoDB" id="39312at2157"/>
<dbReference type="UniPathway" id="UPA00253">
    <property type="reaction ID" value="UER00333"/>
</dbReference>
<dbReference type="Proteomes" id="UP000000254">
    <property type="component" value="Chromosome"/>
</dbReference>
<dbReference type="GO" id="GO:0005737">
    <property type="term" value="C:cytoplasm"/>
    <property type="evidence" value="ECO:0007669"/>
    <property type="project" value="InterPro"/>
</dbReference>
<dbReference type="GO" id="GO:0005524">
    <property type="term" value="F:ATP binding"/>
    <property type="evidence" value="ECO:0007669"/>
    <property type="project" value="UniProtKB-UniRule"/>
</dbReference>
<dbReference type="GO" id="GO:0004359">
    <property type="term" value="F:glutaminase activity"/>
    <property type="evidence" value="ECO:0007669"/>
    <property type="project" value="InterPro"/>
</dbReference>
<dbReference type="GO" id="GO:0046872">
    <property type="term" value="F:metal ion binding"/>
    <property type="evidence" value="ECO:0007669"/>
    <property type="project" value="UniProtKB-KW"/>
</dbReference>
<dbReference type="GO" id="GO:0003952">
    <property type="term" value="F:NAD+ synthase (glutamine-hydrolyzing) activity"/>
    <property type="evidence" value="ECO:0007669"/>
    <property type="project" value="InterPro"/>
</dbReference>
<dbReference type="GO" id="GO:0008795">
    <property type="term" value="F:NAD+ synthase activity"/>
    <property type="evidence" value="ECO:0007669"/>
    <property type="project" value="UniProtKB-UniRule"/>
</dbReference>
<dbReference type="GO" id="GO:0009435">
    <property type="term" value="P:NAD biosynthetic process"/>
    <property type="evidence" value="ECO:0007669"/>
    <property type="project" value="UniProtKB-UniRule"/>
</dbReference>
<dbReference type="CDD" id="cd00553">
    <property type="entry name" value="NAD_synthase"/>
    <property type="match status" value="1"/>
</dbReference>
<dbReference type="FunFam" id="3.40.50.620:FF:000106">
    <property type="entry name" value="Glutamine-dependent NAD(+) synthetase"/>
    <property type="match status" value="1"/>
</dbReference>
<dbReference type="Gene3D" id="3.40.50.620">
    <property type="entry name" value="HUPs"/>
    <property type="match status" value="1"/>
</dbReference>
<dbReference type="HAMAP" id="MF_00193">
    <property type="entry name" value="NadE_ammonia_dep"/>
    <property type="match status" value="1"/>
</dbReference>
<dbReference type="InterPro" id="IPR022310">
    <property type="entry name" value="NAD/GMP_synthase"/>
</dbReference>
<dbReference type="InterPro" id="IPR003694">
    <property type="entry name" value="NAD_synthase"/>
</dbReference>
<dbReference type="InterPro" id="IPR022926">
    <property type="entry name" value="NH(3)-dep_NAD(+)_synth"/>
</dbReference>
<dbReference type="InterPro" id="IPR014729">
    <property type="entry name" value="Rossmann-like_a/b/a_fold"/>
</dbReference>
<dbReference type="NCBIfam" id="TIGR00552">
    <property type="entry name" value="nadE"/>
    <property type="match status" value="1"/>
</dbReference>
<dbReference type="NCBIfam" id="NF010587">
    <property type="entry name" value="PRK13980.1"/>
    <property type="match status" value="1"/>
</dbReference>
<dbReference type="PANTHER" id="PTHR23090:SF9">
    <property type="entry name" value="GLUTAMINE-DEPENDENT NAD(+) SYNTHETASE"/>
    <property type="match status" value="1"/>
</dbReference>
<dbReference type="PANTHER" id="PTHR23090">
    <property type="entry name" value="NH 3 /GLUTAMINE-DEPENDENT NAD + SYNTHETASE"/>
    <property type="match status" value="1"/>
</dbReference>
<dbReference type="Pfam" id="PF02540">
    <property type="entry name" value="NAD_synthase"/>
    <property type="match status" value="1"/>
</dbReference>
<dbReference type="SUPFAM" id="SSF52402">
    <property type="entry name" value="Adenine nucleotide alpha hydrolases-like"/>
    <property type="match status" value="1"/>
</dbReference>
<name>NADE_STAMF</name>
<feature type="chain" id="PRO_1000077621" description="NH(3)-dependent NAD(+) synthetase">
    <location>
        <begin position="1"/>
        <end position="275"/>
    </location>
</feature>
<feature type="binding site" evidence="1">
    <location>
        <begin position="39"/>
        <end position="46"/>
    </location>
    <ligand>
        <name>ATP</name>
        <dbReference type="ChEBI" id="CHEBI:30616"/>
    </ligand>
</feature>
<feature type="binding site" evidence="1">
    <location>
        <position position="45"/>
    </location>
    <ligand>
        <name>Mg(2+)</name>
        <dbReference type="ChEBI" id="CHEBI:18420"/>
    </ligand>
</feature>
<feature type="binding site" evidence="1">
    <location>
        <position position="124"/>
    </location>
    <ligand>
        <name>deamido-NAD(+)</name>
        <dbReference type="ChEBI" id="CHEBI:58437"/>
    </ligand>
</feature>
<feature type="binding site" evidence="1">
    <location>
        <position position="144"/>
    </location>
    <ligand>
        <name>ATP</name>
        <dbReference type="ChEBI" id="CHEBI:30616"/>
    </ligand>
</feature>
<feature type="binding site" evidence="1">
    <location>
        <position position="149"/>
    </location>
    <ligand>
        <name>Mg(2+)</name>
        <dbReference type="ChEBI" id="CHEBI:18420"/>
    </ligand>
</feature>
<feature type="binding site" evidence="1">
    <location>
        <position position="157"/>
    </location>
    <ligand>
        <name>deamido-NAD(+)</name>
        <dbReference type="ChEBI" id="CHEBI:58437"/>
    </ligand>
</feature>
<feature type="binding site" evidence="1">
    <location>
        <position position="164"/>
    </location>
    <ligand>
        <name>deamido-NAD(+)</name>
        <dbReference type="ChEBI" id="CHEBI:58437"/>
    </ligand>
</feature>
<feature type="binding site" evidence="1">
    <location>
        <position position="173"/>
    </location>
    <ligand>
        <name>ATP</name>
        <dbReference type="ChEBI" id="CHEBI:30616"/>
    </ligand>
</feature>
<feature type="binding site" evidence="1">
    <location>
        <position position="195"/>
    </location>
    <ligand>
        <name>ATP</name>
        <dbReference type="ChEBI" id="CHEBI:30616"/>
    </ligand>
</feature>
<feature type="binding site" evidence="1">
    <location>
        <begin position="255"/>
        <end position="256"/>
    </location>
    <ligand>
        <name>deamido-NAD(+)</name>
        <dbReference type="ChEBI" id="CHEBI:58437"/>
    </ligand>
</feature>
<evidence type="ECO:0000255" key="1">
    <source>
        <dbReference type="HAMAP-Rule" id="MF_00193"/>
    </source>
</evidence>